<keyword id="KW-0067">ATP-binding</keyword>
<keyword id="KW-0133">Cell shape</keyword>
<keyword id="KW-0961">Cell wall biogenesis/degradation</keyword>
<keyword id="KW-0963">Cytoplasm</keyword>
<keyword id="KW-0436">Ligase</keyword>
<keyword id="KW-0460">Magnesium</keyword>
<keyword id="KW-0464">Manganese</keyword>
<keyword id="KW-0479">Metal-binding</keyword>
<keyword id="KW-0547">Nucleotide-binding</keyword>
<keyword id="KW-0573">Peptidoglycan synthesis</keyword>
<keyword id="KW-1185">Reference proteome</keyword>
<gene>
    <name evidence="2" type="primary">ddl</name>
    <name type="synonym">ddlB</name>
    <name type="ordered locus">bbp_196</name>
</gene>
<organism>
    <name type="scientific">Buchnera aphidicola subsp. Baizongia pistaciae (strain Bp)</name>
    <dbReference type="NCBI Taxonomy" id="224915"/>
    <lineage>
        <taxon>Bacteria</taxon>
        <taxon>Pseudomonadati</taxon>
        <taxon>Pseudomonadota</taxon>
        <taxon>Gammaproteobacteria</taxon>
        <taxon>Enterobacterales</taxon>
        <taxon>Erwiniaceae</taxon>
        <taxon>Buchnera</taxon>
    </lineage>
</organism>
<protein>
    <recommendedName>
        <fullName evidence="2">D-alanine--D-alanine ligase</fullName>
        <ecNumber evidence="2">6.3.2.4</ecNumber>
    </recommendedName>
    <alternativeName>
        <fullName evidence="2">D-Ala-D-Ala ligase</fullName>
    </alternativeName>
    <alternativeName>
        <fullName evidence="2">D-alanylalanine synthetase</fullName>
    </alternativeName>
</protein>
<comment type="function">
    <text evidence="2">Cell wall formation.</text>
</comment>
<comment type="catalytic activity">
    <reaction evidence="2">
        <text>2 D-alanine + ATP = D-alanyl-D-alanine + ADP + phosphate + H(+)</text>
        <dbReference type="Rhea" id="RHEA:11224"/>
        <dbReference type="ChEBI" id="CHEBI:15378"/>
        <dbReference type="ChEBI" id="CHEBI:30616"/>
        <dbReference type="ChEBI" id="CHEBI:43474"/>
        <dbReference type="ChEBI" id="CHEBI:57416"/>
        <dbReference type="ChEBI" id="CHEBI:57822"/>
        <dbReference type="ChEBI" id="CHEBI:456216"/>
        <dbReference type="EC" id="6.3.2.4"/>
    </reaction>
</comment>
<comment type="cofactor">
    <cofactor evidence="1">
        <name>Mg(2+)</name>
        <dbReference type="ChEBI" id="CHEBI:18420"/>
    </cofactor>
    <cofactor evidence="1">
        <name>Mn(2+)</name>
        <dbReference type="ChEBI" id="CHEBI:29035"/>
    </cofactor>
    <text evidence="1">Binds 2 magnesium or manganese ions per subunit.</text>
</comment>
<comment type="pathway">
    <text evidence="2">Cell wall biogenesis; peptidoglycan biosynthesis.</text>
</comment>
<comment type="subcellular location">
    <subcellularLocation>
        <location evidence="2">Cytoplasm</location>
    </subcellularLocation>
</comment>
<comment type="similarity">
    <text evidence="2">Belongs to the D-alanine--D-alanine ligase family.</text>
</comment>
<name>DDL_BUCBP</name>
<proteinExistence type="inferred from homology"/>
<dbReference type="EC" id="6.3.2.4" evidence="2"/>
<dbReference type="EMBL" id="AE016826">
    <property type="protein sequence ID" value="AAO26928.1"/>
    <property type="molecule type" value="Genomic_DNA"/>
</dbReference>
<dbReference type="SMR" id="P59435"/>
<dbReference type="STRING" id="224915.bbp_196"/>
<dbReference type="KEGG" id="bab:bbp_196"/>
<dbReference type="eggNOG" id="COG1181">
    <property type="taxonomic scope" value="Bacteria"/>
</dbReference>
<dbReference type="HOGENOM" id="CLU_039268_1_2_6"/>
<dbReference type="OrthoDB" id="9813261at2"/>
<dbReference type="UniPathway" id="UPA00219"/>
<dbReference type="Proteomes" id="UP000000601">
    <property type="component" value="Chromosome"/>
</dbReference>
<dbReference type="GO" id="GO:0005829">
    <property type="term" value="C:cytosol"/>
    <property type="evidence" value="ECO:0007669"/>
    <property type="project" value="TreeGrafter"/>
</dbReference>
<dbReference type="GO" id="GO:0005524">
    <property type="term" value="F:ATP binding"/>
    <property type="evidence" value="ECO:0007669"/>
    <property type="project" value="UniProtKB-KW"/>
</dbReference>
<dbReference type="GO" id="GO:0008716">
    <property type="term" value="F:D-alanine-D-alanine ligase activity"/>
    <property type="evidence" value="ECO:0007669"/>
    <property type="project" value="UniProtKB-UniRule"/>
</dbReference>
<dbReference type="GO" id="GO:0046872">
    <property type="term" value="F:metal ion binding"/>
    <property type="evidence" value="ECO:0007669"/>
    <property type="project" value="UniProtKB-KW"/>
</dbReference>
<dbReference type="GO" id="GO:0071555">
    <property type="term" value="P:cell wall organization"/>
    <property type="evidence" value="ECO:0007669"/>
    <property type="project" value="UniProtKB-KW"/>
</dbReference>
<dbReference type="GO" id="GO:0009252">
    <property type="term" value="P:peptidoglycan biosynthetic process"/>
    <property type="evidence" value="ECO:0007669"/>
    <property type="project" value="UniProtKB-UniRule"/>
</dbReference>
<dbReference type="GO" id="GO:0008360">
    <property type="term" value="P:regulation of cell shape"/>
    <property type="evidence" value="ECO:0007669"/>
    <property type="project" value="UniProtKB-KW"/>
</dbReference>
<dbReference type="Gene3D" id="3.40.50.20">
    <property type="match status" value="1"/>
</dbReference>
<dbReference type="Gene3D" id="3.30.1490.20">
    <property type="entry name" value="ATP-grasp fold, A domain"/>
    <property type="match status" value="1"/>
</dbReference>
<dbReference type="Gene3D" id="3.30.470.20">
    <property type="entry name" value="ATP-grasp fold, B domain"/>
    <property type="match status" value="1"/>
</dbReference>
<dbReference type="HAMAP" id="MF_00047">
    <property type="entry name" value="Dala_Dala_lig"/>
    <property type="match status" value="1"/>
</dbReference>
<dbReference type="InterPro" id="IPR011761">
    <property type="entry name" value="ATP-grasp"/>
</dbReference>
<dbReference type="InterPro" id="IPR013815">
    <property type="entry name" value="ATP_grasp_subdomain_1"/>
</dbReference>
<dbReference type="InterPro" id="IPR000291">
    <property type="entry name" value="D-Ala_lig_Van_CS"/>
</dbReference>
<dbReference type="InterPro" id="IPR005905">
    <property type="entry name" value="D_ala_D_ala"/>
</dbReference>
<dbReference type="InterPro" id="IPR011095">
    <property type="entry name" value="Dala_Dala_lig_C"/>
</dbReference>
<dbReference type="InterPro" id="IPR011127">
    <property type="entry name" value="Dala_Dala_lig_N"/>
</dbReference>
<dbReference type="InterPro" id="IPR016185">
    <property type="entry name" value="PreATP-grasp_dom_sf"/>
</dbReference>
<dbReference type="NCBIfam" id="TIGR01205">
    <property type="entry name" value="D_ala_D_alaTIGR"/>
    <property type="match status" value="1"/>
</dbReference>
<dbReference type="NCBIfam" id="NF002378">
    <property type="entry name" value="PRK01372.1"/>
    <property type="match status" value="1"/>
</dbReference>
<dbReference type="PANTHER" id="PTHR23132">
    <property type="entry name" value="D-ALANINE--D-ALANINE LIGASE"/>
    <property type="match status" value="1"/>
</dbReference>
<dbReference type="PANTHER" id="PTHR23132:SF23">
    <property type="entry name" value="D-ALANINE--D-ALANINE LIGASE B"/>
    <property type="match status" value="1"/>
</dbReference>
<dbReference type="Pfam" id="PF07478">
    <property type="entry name" value="Dala_Dala_lig_C"/>
    <property type="match status" value="1"/>
</dbReference>
<dbReference type="Pfam" id="PF01820">
    <property type="entry name" value="Dala_Dala_lig_N"/>
    <property type="match status" value="1"/>
</dbReference>
<dbReference type="PIRSF" id="PIRSF039102">
    <property type="entry name" value="Ddl/VanB"/>
    <property type="match status" value="1"/>
</dbReference>
<dbReference type="SUPFAM" id="SSF56059">
    <property type="entry name" value="Glutathione synthetase ATP-binding domain-like"/>
    <property type="match status" value="1"/>
</dbReference>
<dbReference type="SUPFAM" id="SSF52440">
    <property type="entry name" value="PreATP-grasp domain"/>
    <property type="match status" value="1"/>
</dbReference>
<dbReference type="PROSITE" id="PS50975">
    <property type="entry name" value="ATP_GRASP"/>
    <property type="match status" value="1"/>
</dbReference>
<dbReference type="PROSITE" id="PS00843">
    <property type="entry name" value="DALA_DALA_LIGASE_1"/>
    <property type="match status" value="1"/>
</dbReference>
<dbReference type="PROSITE" id="PS00844">
    <property type="entry name" value="DALA_DALA_LIGASE_2"/>
    <property type="match status" value="1"/>
</dbReference>
<sequence length="309" mass="34986">MTIITEKIAVLLGGTSQERNISLISGYNILNSLLKSGIHAVAIDTKDFPITQLPHQKFTKAFIALHGRDGEDGTIQSVLKYLNIPFTGSKTLPSAISINKFKTKLLWQSFNLPVVPYLHINKHEFNKKFLQKFKKNISLLGLPIIVKPNQEGSSIGITIVYSYETLYKACKTAFIFDNSILIEKFIYGEEYTISILGKKILPIIRICPENTFYNYNSKYLSNRTTYFCPSGLNKLKELELKKITLTAWNIIDGTGWGRVDVIMDYKNKFWLLEANTCPGMTDHSLFPMSAKKAGISYQILVQKILELAN</sequence>
<accession>P59435</accession>
<reference key="1">
    <citation type="journal article" date="2003" name="Proc. Natl. Acad. Sci. U.S.A.">
        <title>Reductive genome evolution in Buchnera aphidicola.</title>
        <authorList>
            <person name="van Ham R.C.H.J."/>
            <person name="Kamerbeek J."/>
            <person name="Palacios C."/>
            <person name="Rausell C."/>
            <person name="Abascal F."/>
            <person name="Bastolla U."/>
            <person name="Fernandez J.M."/>
            <person name="Jimenez L."/>
            <person name="Postigo M."/>
            <person name="Silva F.J."/>
            <person name="Tamames J."/>
            <person name="Viguera E."/>
            <person name="Latorre A."/>
            <person name="Valencia A."/>
            <person name="Moran F."/>
            <person name="Moya A."/>
        </authorList>
    </citation>
    <scope>NUCLEOTIDE SEQUENCE [LARGE SCALE GENOMIC DNA]</scope>
    <source>
        <strain>Bp</strain>
    </source>
</reference>
<evidence type="ECO:0000250" key="1"/>
<evidence type="ECO:0000255" key="2">
    <source>
        <dbReference type="HAMAP-Rule" id="MF_00047"/>
    </source>
</evidence>
<feature type="chain" id="PRO_0000177799" description="D-alanine--D-alanine ligase">
    <location>
        <begin position="1"/>
        <end position="309"/>
    </location>
</feature>
<feature type="domain" description="ATP-grasp" evidence="2">
    <location>
        <begin position="104"/>
        <end position="306"/>
    </location>
</feature>
<feature type="binding site" evidence="2">
    <location>
        <begin position="137"/>
        <end position="192"/>
    </location>
    <ligand>
        <name>ATP</name>
        <dbReference type="ChEBI" id="CHEBI:30616"/>
    </ligand>
</feature>
<feature type="binding site" evidence="2">
    <location>
        <position position="260"/>
    </location>
    <ligand>
        <name>Mg(2+)</name>
        <dbReference type="ChEBI" id="CHEBI:18420"/>
        <label>1</label>
    </ligand>
</feature>
<feature type="binding site" evidence="2">
    <location>
        <position position="273"/>
    </location>
    <ligand>
        <name>Mg(2+)</name>
        <dbReference type="ChEBI" id="CHEBI:18420"/>
        <label>1</label>
    </ligand>
</feature>
<feature type="binding site" evidence="2">
    <location>
        <position position="273"/>
    </location>
    <ligand>
        <name>Mg(2+)</name>
        <dbReference type="ChEBI" id="CHEBI:18420"/>
        <label>2</label>
    </ligand>
</feature>
<feature type="binding site" evidence="2">
    <location>
        <position position="275"/>
    </location>
    <ligand>
        <name>Mg(2+)</name>
        <dbReference type="ChEBI" id="CHEBI:18420"/>
        <label>2</label>
    </ligand>
</feature>